<name>RL29_BURPS</name>
<gene>
    <name evidence="1" type="primary">rpmC</name>
    <name type="ordered locus">BPSL3205</name>
</gene>
<sequence length="64" mass="7310">MKASELLQKDQAALNKELSDLLKAQFGLRMQLATQQLTNTSQLKKVRRDIARVRTVLTQKANQK</sequence>
<evidence type="ECO:0000255" key="1">
    <source>
        <dbReference type="HAMAP-Rule" id="MF_00374"/>
    </source>
</evidence>
<evidence type="ECO:0000305" key="2"/>
<protein>
    <recommendedName>
        <fullName evidence="1">Large ribosomal subunit protein uL29</fullName>
    </recommendedName>
    <alternativeName>
        <fullName evidence="2">50S ribosomal protein L29</fullName>
    </alternativeName>
</protein>
<reference key="1">
    <citation type="journal article" date="2004" name="Proc. Natl. Acad. Sci. U.S.A.">
        <title>Genomic plasticity of the causative agent of melioidosis, Burkholderia pseudomallei.</title>
        <authorList>
            <person name="Holden M.T.G."/>
            <person name="Titball R.W."/>
            <person name="Peacock S.J."/>
            <person name="Cerdeno-Tarraga A.-M."/>
            <person name="Atkins T."/>
            <person name="Crossman L.C."/>
            <person name="Pitt T."/>
            <person name="Churcher C."/>
            <person name="Mungall K.L."/>
            <person name="Bentley S.D."/>
            <person name="Sebaihia M."/>
            <person name="Thomson N.R."/>
            <person name="Bason N."/>
            <person name="Beacham I.R."/>
            <person name="Brooks K."/>
            <person name="Brown K.A."/>
            <person name="Brown N.F."/>
            <person name="Challis G.L."/>
            <person name="Cherevach I."/>
            <person name="Chillingworth T."/>
            <person name="Cronin A."/>
            <person name="Crossett B."/>
            <person name="Davis P."/>
            <person name="DeShazer D."/>
            <person name="Feltwell T."/>
            <person name="Fraser A."/>
            <person name="Hance Z."/>
            <person name="Hauser H."/>
            <person name="Holroyd S."/>
            <person name="Jagels K."/>
            <person name="Keith K.E."/>
            <person name="Maddison M."/>
            <person name="Moule S."/>
            <person name="Price C."/>
            <person name="Quail M.A."/>
            <person name="Rabbinowitsch E."/>
            <person name="Rutherford K."/>
            <person name="Sanders M."/>
            <person name="Simmonds M."/>
            <person name="Songsivilai S."/>
            <person name="Stevens K."/>
            <person name="Tumapa S."/>
            <person name="Vesaratchavest M."/>
            <person name="Whitehead S."/>
            <person name="Yeats C."/>
            <person name="Barrell B.G."/>
            <person name="Oyston P.C.F."/>
            <person name="Parkhill J."/>
        </authorList>
    </citation>
    <scope>NUCLEOTIDE SEQUENCE [LARGE SCALE GENOMIC DNA]</scope>
    <source>
        <strain>K96243</strain>
    </source>
</reference>
<organism>
    <name type="scientific">Burkholderia pseudomallei (strain K96243)</name>
    <dbReference type="NCBI Taxonomy" id="272560"/>
    <lineage>
        <taxon>Bacteria</taxon>
        <taxon>Pseudomonadati</taxon>
        <taxon>Pseudomonadota</taxon>
        <taxon>Betaproteobacteria</taxon>
        <taxon>Burkholderiales</taxon>
        <taxon>Burkholderiaceae</taxon>
        <taxon>Burkholderia</taxon>
        <taxon>pseudomallei group</taxon>
    </lineage>
</organism>
<feature type="chain" id="PRO_1000007442" description="Large ribosomal subunit protein uL29">
    <location>
        <begin position="1"/>
        <end position="64"/>
    </location>
</feature>
<proteinExistence type="inferred from homology"/>
<keyword id="KW-1185">Reference proteome</keyword>
<keyword id="KW-0687">Ribonucleoprotein</keyword>
<keyword id="KW-0689">Ribosomal protein</keyword>
<accession>Q63Q19</accession>
<dbReference type="EMBL" id="BX571965">
    <property type="protein sequence ID" value="CAH37216.1"/>
    <property type="molecule type" value="Genomic_DNA"/>
</dbReference>
<dbReference type="RefSeq" id="WP_004199856.1">
    <property type="nucleotide sequence ID" value="NZ_CP009538.1"/>
</dbReference>
<dbReference type="RefSeq" id="YP_109799.1">
    <property type="nucleotide sequence ID" value="NC_006350.1"/>
</dbReference>
<dbReference type="SMR" id="Q63Q19"/>
<dbReference type="STRING" id="272560.BPSL3205"/>
<dbReference type="GeneID" id="93061824"/>
<dbReference type="KEGG" id="bps:BPSL3205"/>
<dbReference type="PATRIC" id="fig|272560.51.peg.2033"/>
<dbReference type="eggNOG" id="COG0255">
    <property type="taxonomic scope" value="Bacteria"/>
</dbReference>
<dbReference type="PRO" id="PR:Q63Q19"/>
<dbReference type="Proteomes" id="UP000000605">
    <property type="component" value="Chromosome 1"/>
</dbReference>
<dbReference type="GO" id="GO:0022625">
    <property type="term" value="C:cytosolic large ribosomal subunit"/>
    <property type="evidence" value="ECO:0007669"/>
    <property type="project" value="TreeGrafter"/>
</dbReference>
<dbReference type="GO" id="GO:0003735">
    <property type="term" value="F:structural constituent of ribosome"/>
    <property type="evidence" value="ECO:0007669"/>
    <property type="project" value="InterPro"/>
</dbReference>
<dbReference type="GO" id="GO:0006412">
    <property type="term" value="P:translation"/>
    <property type="evidence" value="ECO:0007669"/>
    <property type="project" value="UniProtKB-UniRule"/>
</dbReference>
<dbReference type="CDD" id="cd00427">
    <property type="entry name" value="Ribosomal_L29_HIP"/>
    <property type="match status" value="1"/>
</dbReference>
<dbReference type="Gene3D" id="6.10.140.1970">
    <property type="match status" value="1"/>
</dbReference>
<dbReference type="HAMAP" id="MF_00374">
    <property type="entry name" value="Ribosomal_uL29"/>
    <property type="match status" value="1"/>
</dbReference>
<dbReference type="InterPro" id="IPR050063">
    <property type="entry name" value="Ribosomal_protein_uL29"/>
</dbReference>
<dbReference type="InterPro" id="IPR001854">
    <property type="entry name" value="Ribosomal_uL29"/>
</dbReference>
<dbReference type="InterPro" id="IPR018254">
    <property type="entry name" value="Ribosomal_uL29_CS"/>
</dbReference>
<dbReference type="InterPro" id="IPR036049">
    <property type="entry name" value="Ribosomal_uL29_sf"/>
</dbReference>
<dbReference type="NCBIfam" id="TIGR00012">
    <property type="entry name" value="L29"/>
    <property type="match status" value="1"/>
</dbReference>
<dbReference type="PANTHER" id="PTHR10916">
    <property type="entry name" value="60S RIBOSOMAL PROTEIN L35/50S RIBOSOMAL PROTEIN L29"/>
    <property type="match status" value="1"/>
</dbReference>
<dbReference type="PANTHER" id="PTHR10916:SF0">
    <property type="entry name" value="LARGE RIBOSOMAL SUBUNIT PROTEIN UL29C"/>
    <property type="match status" value="1"/>
</dbReference>
<dbReference type="Pfam" id="PF00831">
    <property type="entry name" value="Ribosomal_L29"/>
    <property type="match status" value="1"/>
</dbReference>
<dbReference type="SUPFAM" id="SSF46561">
    <property type="entry name" value="Ribosomal protein L29 (L29p)"/>
    <property type="match status" value="1"/>
</dbReference>
<dbReference type="PROSITE" id="PS00579">
    <property type="entry name" value="RIBOSOMAL_L29"/>
    <property type="match status" value="1"/>
</dbReference>
<comment type="similarity">
    <text evidence="1">Belongs to the universal ribosomal protein uL29 family.</text>
</comment>